<keyword id="KW-0067">ATP-binding</keyword>
<keyword id="KW-0963">Cytoplasm</keyword>
<keyword id="KW-0342">GTP-binding</keyword>
<keyword id="KW-0378">Hydrolase</keyword>
<keyword id="KW-0460">Magnesium</keyword>
<keyword id="KW-0479">Metal-binding</keyword>
<keyword id="KW-0547">Nucleotide-binding</keyword>
<proteinExistence type="inferred from homology"/>
<dbReference type="EC" id="3.6.5.-" evidence="1"/>
<dbReference type="EMBL" id="CP000825">
    <property type="protein sequence ID" value="ABV49857.1"/>
    <property type="molecule type" value="Genomic_DNA"/>
</dbReference>
<dbReference type="RefSeq" id="WP_012007023.1">
    <property type="nucleotide sequence ID" value="NC_009840.1"/>
</dbReference>
<dbReference type="SMR" id="A8G2M6"/>
<dbReference type="STRING" id="93060.P9215_02381"/>
<dbReference type="KEGG" id="pmh:P9215_02381"/>
<dbReference type="eggNOG" id="COG0536">
    <property type="taxonomic scope" value="Bacteria"/>
</dbReference>
<dbReference type="HOGENOM" id="CLU_011747_2_0_3"/>
<dbReference type="OrthoDB" id="9807318at2"/>
<dbReference type="Proteomes" id="UP000002014">
    <property type="component" value="Chromosome"/>
</dbReference>
<dbReference type="GO" id="GO:0005737">
    <property type="term" value="C:cytoplasm"/>
    <property type="evidence" value="ECO:0007669"/>
    <property type="project" value="UniProtKB-SubCell"/>
</dbReference>
<dbReference type="GO" id="GO:0005524">
    <property type="term" value="F:ATP binding"/>
    <property type="evidence" value="ECO:0007669"/>
    <property type="project" value="UniProtKB-KW"/>
</dbReference>
<dbReference type="GO" id="GO:0005525">
    <property type="term" value="F:GTP binding"/>
    <property type="evidence" value="ECO:0007669"/>
    <property type="project" value="UniProtKB-UniRule"/>
</dbReference>
<dbReference type="GO" id="GO:0003924">
    <property type="term" value="F:GTPase activity"/>
    <property type="evidence" value="ECO:0007669"/>
    <property type="project" value="UniProtKB-UniRule"/>
</dbReference>
<dbReference type="GO" id="GO:0000287">
    <property type="term" value="F:magnesium ion binding"/>
    <property type="evidence" value="ECO:0007669"/>
    <property type="project" value="InterPro"/>
</dbReference>
<dbReference type="GO" id="GO:0042254">
    <property type="term" value="P:ribosome biogenesis"/>
    <property type="evidence" value="ECO:0007669"/>
    <property type="project" value="UniProtKB-UniRule"/>
</dbReference>
<dbReference type="CDD" id="cd01898">
    <property type="entry name" value="Obg"/>
    <property type="match status" value="1"/>
</dbReference>
<dbReference type="FunFam" id="2.70.210.12:FF:000001">
    <property type="entry name" value="GTPase Obg"/>
    <property type="match status" value="1"/>
</dbReference>
<dbReference type="Gene3D" id="2.70.210.12">
    <property type="entry name" value="GTP1/OBG domain"/>
    <property type="match status" value="1"/>
</dbReference>
<dbReference type="Gene3D" id="3.40.50.300">
    <property type="entry name" value="P-loop containing nucleotide triphosphate hydrolases"/>
    <property type="match status" value="1"/>
</dbReference>
<dbReference type="HAMAP" id="MF_01454">
    <property type="entry name" value="GTPase_Obg"/>
    <property type="match status" value="1"/>
</dbReference>
<dbReference type="InterPro" id="IPR031167">
    <property type="entry name" value="G_OBG"/>
</dbReference>
<dbReference type="InterPro" id="IPR006073">
    <property type="entry name" value="GTP-bd"/>
</dbReference>
<dbReference type="InterPro" id="IPR014100">
    <property type="entry name" value="GTP-bd_Obg/CgtA"/>
</dbReference>
<dbReference type="InterPro" id="IPR006169">
    <property type="entry name" value="GTP1_OBG_dom"/>
</dbReference>
<dbReference type="InterPro" id="IPR036726">
    <property type="entry name" value="GTP1_OBG_dom_sf"/>
</dbReference>
<dbReference type="InterPro" id="IPR045086">
    <property type="entry name" value="OBG_GTPase"/>
</dbReference>
<dbReference type="InterPro" id="IPR027417">
    <property type="entry name" value="P-loop_NTPase"/>
</dbReference>
<dbReference type="NCBIfam" id="TIGR02729">
    <property type="entry name" value="Obg_CgtA"/>
    <property type="match status" value="1"/>
</dbReference>
<dbReference type="NCBIfam" id="NF008955">
    <property type="entry name" value="PRK12297.1"/>
    <property type="match status" value="1"/>
</dbReference>
<dbReference type="NCBIfam" id="NF008956">
    <property type="entry name" value="PRK12299.1"/>
    <property type="match status" value="1"/>
</dbReference>
<dbReference type="PANTHER" id="PTHR11702">
    <property type="entry name" value="DEVELOPMENTALLY REGULATED GTP-BINDING PROTEIN-RELATED"/>
    <property type="match status" value="1"/>
</dbReference>
<dbReference type="PANTHER" id="PTHR11702:SF31">
    <property type="entry name" value="MITOCHONDRIAL RIBOSOME-ASSOCIATED GTPASE 2"/>
    <property type="match status" value="1"/>
</dbReference>
<dbReference type="Pfam" id="PF01018">
    <property type="entry name" value="GTP1_OBG"/>
    <property type="match status" value="1"/>
</dbReference>
<dbReference type="Pfam" id="PF01926">
    <property type="entry name" value="MMR_HSR1"/>
    <property type="match status" value="1"/>
</dbReference>
<dbReference type="PIRSF" id="PIRSF002401">
    <property type="entry name" value="GTP_bd_Obg/CgtA"/>
    <property type="match status" value="1"/>
</dbReference>
<dbReference type="PRINTS" id="PR00326">
    <property type="entry name" value="GTP1OBG"/>
</dbReference>
<dbReference type="SUPFAM" id="SSF82051">
    <property type="entry name" value="Obg GTP-binding protein N-terminal domain"/>
    <property type="match status" value="1"/>
</dbReference>
<dbReference type="SUPFAM" id="SSF52540">
    <property type="entry name" value="P-loop containing nucleoside triphosphate hydrolases"/>
    <property type="match status" value="1"/>
</dbReference>
<dbReference type="PROSITE" id="PS51710">
    <property type="entry name" value="G_OBG"/>
    <property type="match status" value="1"/>
</dbReference>
<dbReference type="PROSITE" id="PS51883">
    <property type="entry name" value="OBG"/>
    <property type="match status" value="1"/>
</dbReference>
<name>OBG_PROM2</name>
<organism>
    <name type="scientific">Prochlorococcus marinus (strain MIT 9215)</name>
    <dbReference type="NCBI Taxonomy" id="93060"/>
    <lineage>
        <taxon>Bacteria</taxon>
        <taxon>Bacillati</taxon>
        <taxon>Cyanobacteriota</taxon>
        <taxon>Cyanophyceae</taxon>
        <taxon>Synechococcales</taxon>
        <taxon>Prochlorococcaceae</taxon>
        <taxon>Prochlorococcus</taxon>
    </lineage>
</organism>
<sequence>MQFIDQANIILKAGKGGNGIVSFRREKFVPAGGPSGGNGGRGGSVILIADNNLQTLLDFKFKREIIAKDGCKGGPNKRSGASGEDTILKVPCGTEIRDIKTGIILGDLTKHKESLTIAIGGRGGHGNAYYLSNQNRAPESFTEGKDGEIWEVQLELKLLAEVGIIGLPNAGKSTLISVLSSARPKIANYPFTTLIPNLGVVRKIDGNGCLFADIPGLISGAADGVGLGHDFLRHIQRTKILLHLIDSIAENPLHDFEIIEQELQKYGKGLLDKERIIVLNKMELVDDDYLKIITKKLEDLSKRKVLVISSSLKKGLSSLLSEVWKRI</sequence>
<feature type="chain" id="PRO_0000386134" description="GTPase Obg">
    <location>
        <begin position="1"/>
        <end position="327"/>
    </location>
</feature>
<feature type="domain" description="Obg" evidence="2">
    <location>
        <begin position="1"/>
        <end position="159"/>
    </location>
</feature>
<feature type="domain" description="OBG-type G" evidence="1">
    <location>
        <begin position="160"/>
        <end position="327"/>
    </location>
</feature>
<feature type="binding site" evidence="1">
    <location>
        <begin position="166"/>
        <end position="173"/>
    </location>
    <ligand>
        <name>ATP</name>
        <dbReference type="ChEBI" id="CHEBI:30616"/>
    </ligand>
</feature>
<feature type="binding site" evidence="1">
    <location>
        <position position="173"/>
    </location>
    <ligand>
        <name>Mg(2+)</name>
        <dbReference type="ChEBI" id="CHEBI:18420"/>
    </ligand>
</feature>
<feature type="binding site" evidence="1">
    <location>
        <begin position="191"/>
        <end position="195"/>
    </location>
    <ligand>
        <name>ATP</name>
        <dbReference type="ChEBI" id="CHEBI:30616"/>
    </ligand>
</feature>
<feature type="binding site" evidence="1">
    <location>
        <position position="193"/>
    </location>
    <ligand>
        <name>Mg(2+)</name>
        <dbReference type="ChEBI" id="CHEBI:18420"/>
    </ligand>
</feature>
<feature type="binding site" evidence="1">
    <location>
        <begin position="213"/>
        <end position="216"/>
    </location>
    <ligand>
        <name>ATP</name>
        <dbReference type="ChEBI" id="CHEBI:30616"/>
    </ligand>
</feature>
<feature type="binding site" evidence="1">
    <location>
        <begin position="280"/>
        <end position="283"/>
    </location>
    <ligand>
        <name>ATP</name>
        <dbReference type="ChEBI" id="CHEBI:30616"/>
    </ligand>
</feature>
<feature type="binding site" evidence="1">
    <location>
        <begin position="309"/>
        <end position="311"/>
    </location>
    <ligand>
        <name>ATP</name>
        <dbReference type="ChEBI" id="CHEBI:30616"/>
    </ligand>
</feature>
<evidence type="ECO:0000255" key="1">
    <source>
        <dbReference type="HAMAP-Rule" id="MF_01454"/>
    </source>
</evidence>
<evidence type="ECO:0000255" key="2">
    <source>
        <dbReference type="PROSITE-ProRule" id="PRU01231"/>
    </source>
</evidence>
<accession>A8G2M6</accession>
<gene>
    <name evidence="1" type="primary">obg</name>
    <name type="ordered locus">P9215_02381</name>
</gene>
<comment type="function">
    <text evidence="1">An essential GTPase which binds GTP, GDP and possibly (p)ppGpp with moderate affinity, with high nucleotide exchange rates and a fairly low GTP hydrolysis rate. Plays a role in control of the cell cycle, stress response, ribosome biogenesis and in those bacteria that undergo differentiation, in morphogenesis control.</text>
</comment>
<comment type="cofactor">
    <cofactor evidence="1">
        <name>Mg(2+)</name>
        <dbReference type="ChEBI" id="CHEBI:18420"/>
    </cofactor>
</comment>
<comment type="subunit">
    <text evidence="1">Monomer.</text>
</comment>
<comment type="subcellular location">
    <subcellularLocation>
        <location evidence="1">Cytoplasm</location>
    </subcellularLocation>
</comment>
<comment type="similarity">
    <text evidence="1">Belongs to the TRAFAC class OBG-HflX-like GTPase superfamily. OBG GTPase family.</text>
</comment>
<reference key="1">
    <citation type="journal article" date="2007" name="PLoS Genet.">
        <title>Patterns and implications of gene gain and loss in the evolution of Prochlorococcus.</title>
        <authorList>
            <person name="Kettler G.C."/>
            <person name="Martiny A.C."/>
            <person name="Huang K."/>
            <person name="Zucker J."/>
            <person name="Coleman M.L."/>
            <person name="Rodrigue S."/>
            <person name="Chen F."/>
            <person name="Lapidus A."/>
            <person name="Ferriera S."/>
            <person name="Johnson J."/>
            <person name="Steglich C."/>
            <person name="Church G.M."/>
            <person name="Richardson P."/>
            <person name="Chisholm S.W."/>
        </authorList>
    </citation>
    <scope>NUCLEOTIDE SEQUENCE [LARGE SCALE GENOMIC DNA]</scope>
    <source>
        <strain>MIT 9215</strain>
    </source>
</reference>
<protein>
    <recommendedName>
        <fullName evidence="1">GTPase Obg</fullName>
        <ecNumber evidence="1">3.6.5.-</ecNumber>
    </recommendedName>
    <alternativeName>
        <fullName evidence="1">GTP-binding protein Obg</fullName>
    </alternativeName>
</protein>